<proteinExistence type="inferred from homology"/>
<feature type="chain" id="PRO_1000117429" description="2-C-methyl-D-erythritol 2,4-cyclodiphosphate synthase">
    <location>
        <begin position="1"/>
        <end position="159"/>
    </location>
</feature>
<feature type="binding site" evidence="1">
    <location>
        <begin position="8"/>
        <end position="10"/>
    </location>
    <ligand>
        <name>4-CDP-2-C-methyl-D-erythritol 2-phosphate</name>
        <dbReference type="ChEBI" id="CHEBI:57919"/>
    </ligand>
</feature>
<feature type="binding site" evidence="1">
    <location>
        <position position="8"/>
    </location>
    <ligand>
        <name>a divalent metal cation</name>
        <dbReference type="ChEBI" id="CHEBI:60240"/>
    </ligand>
</feature>
<feature type="binding site" evidence="1">
    <location>
        <position position="10"/>
    </location>
    <ligand>
        <name>a divalent metal cation</name>
        <dbReference type="ChEBI" id="CHEBI:60240"/>
    </ligand>
</feature>
<feature type="binding site" evidence="1">
    <location>
        <begin position="34"/>
        <end position="35"/>
    </location>
    <ligand>
        <name>4-CDP-2-C-methyl-D-erythritol 2-phosphate</name>
        <dbReference type="ChEBI" id="CHEBI:57919"/>
    </ligand>
</feature>
<feature type="binding site" evidence="1">
    <location>
        <position position="42"/>
    </location>
    <ligand>
        <name>a divalent metal cation</name>
        <dbReference type="ChEBI" id="CHEBI:60240"/>
    </ligand>
</feature>
<feature type="binding site" evidence="1">
    <location>
        <begin position="56"/>
        <end position="58"/>
    </location>
    <ligand>
        <name>4-CDP-2-C-methyl-D-erythritol 2-phosphate</name>
        <dbReference type="ChEBI" id="CHEBI:57919"/>
    </ligand>
</feature>
<feature type="binding site" evidence="1">
    <location>
        <begin position="61"/>
        <end position="65"/>
    </location>
    <ligand>
        <name>4-CDP-2-C-methyl-D-erythritol 2-phosphate</name>
        <dbReference type="ChEBI" id="CHEBI:57919"/>
    </ligand>
</feature>
<feature type="binding site" evidence="1">
    <location>
        <begin position="100"/>
        <end position="106"/>
    </location>
    <ligand>
        <name>4-CDP-2-C-methyl-D-erythritol 2-phosphate</name>
        <dbReference type="ChEBI" id="CHEBI:57919"/>
    </ligand>
</feature>
<feature type="binding site" evidence="1">
    <location>
        <begin position="132"/>
        <end position="135"/>
    </location>
    <ligand>
        <name>4-CDP-2-C-methyl-D-erythritol 2-phosphate</name>
        <dbReference type="ChEBI" id="CHEBI:57919"/>
    </ligand>
</feature>
<feature type="binding site" evidence="1">
    <location>
        <position position="139"/>
    </location>
    <ligand>
        <name>4-CDP-2-C-methyl-D-erythritol 2-phosphate</name>
        <dbReference type="ChEBI" id="CHEBI:57919"/>
    </ligand>
</feature>
<feature type="binding site" evidence="1">
    <location>
        <position position="142"/>
    </location>
    <ligand>
        <name>4-CDP-2-C-methyl-D-erythritol 2-phosphate</name>
        <dbReference type="ChEBI" id="CHEBI:57919"/>
    </ligand>
</feature>
<feature type="site" description="Transition state stabilizer" evidence="1">
    <location>
        <position position="34"/>
    </location>
</feature>
<feature type="site" description="Transition state stabilizer" evidence="1">
    <location>
        <position position="133"/>
    </location>
</feature>
<accession>B1LQ66</accession>
<organism>
    <name type="scientific">Escherichia coli (strain SMS-3-5 / SECEC)</name>
    <dbReference type="NCBI Taxonomy" id="439855"/>
    <lineage>
        <taxon>Bacteria</taxon>
        <taxon>Pseudomonadati</taxon>
        <taxon>Pseudomonadota</taxon>
        <taxon>Gammaproteobacteria</taxon>
        <taxon>Enterobacterales</taxon>
        <taxon>Enterobacteriaceae</taxon>
        <taxon>Escherichia</taxon>
    </lineage>
</organism>
<reference key="1">
    <citation type="journal article" date="2008" name="J. Bacteriol.">
        <title>Insights into the environmental resistance gene pool from the genome sequence of the multidrug-resistant environmental isolate Escherichia coli SMS-3-5.</title>
        <authorList>
            <person name="Fricke W.F."/>
            <person name="Wright M.S."/>
            <person name="Lindell A.H."/>
            <person name="Harkins D.M."/>
            <person name="Baker-Austin C."/>
            <person name="Ravel J."/>
            <person name="Stepanauskas R."/>
        </authorList>
    </citation>
    <scope>NUCLEOTIDE SEQUENCE [LARGE SCALE GENOMIC DNA]</scope>
    <source>
        <strain>SMS-3-5 / SECEC</strain>
    </source>
</reference>
<name>ISPF_ECOSM</name>
<comment type="function">
    <text evidence="1">Involved in the biosynthesis of isopentenyl diphosphate (IPP) and dimethylallyl diphosphate (DMAPP), two major building blocks of isoprenoid compounds. Catalyzes the conversion of 4-diphosphocytidyl-2-C-methyl-D-erythritol 2-phosphate (CDP-ME2P) to 2-C-methyl-D-erythritol 2,4-cyclodiphosphate (ME-CPP) with a corresponding release of cytidine 5-monophosphate (CMP).</text>
</comment>
<comment type="catalytic activity">
    <reaction evidence="1">
        <text>4-CDP-2-C-methyl-D-erythritol 2-phosphate = 2-C-methyl-D-erythritol 2,4-cyclic diphosphate + CMP</text>
        <dbReference type="Rhea" id="RHEA:23864"/>
        <dbReference type="ChEBI" id="CHEBI:57919"/>
        <dbReference type="ChEBI" id="CHEBI:58483"/>
        <dbReference type="ChEBI" id="CHEBI:60377"/>
        <dbReference type="EC" id="4.6.1.12"/>
    </reaction>
</comment>
<comment type="cofactor">
    <cofactor evidence="1">
        <name>a divalent metal cation</name>
        <dbReference type="ChEBI" id="CHEBI:60240"/>
    </cofactor>
    <text evidence="1">Binds 1 divalent metal cation per subunit.</text>
</comment>
<comment type="pathway">
    <text evidence="1">Isoprenoid biosynthesis; isopentenyl diphosphate biosynthesis via DXP pathway; isopentenyl diphosphate from 1-deoxy-D-xylulose 5-phosphate: step 4/6.</text>
</comment>
<comment type="subunit">
    <text evidence="1">Homotrimer.</text>
</comment>
<comment type="similarity">
    <text evidence="1">Belongs to the IspF family.</text>
</comment>
<sequence length="159" mass="16868">MRIGHGFDVHAFGGEGPIIIGGVRIPYEKGLLAHSDGDVALHALTDALLGAAALGDIGKLFPDTDPAFKGADSRELLREAWRRIQAKGYALGNVDVTIIAQAPKMLPHIPQMRVFIAEDLGCHMDDVNVKATTTEKLGFTGRGEGIACEAVALLIKATK</sequence>
<protein>
    <recommendedName>
        <fullName evidence="1">2-C-methyl-D-erythritol 2,4-cyclodiphosphate synthase</fullName>
        <shortName evidence="1">MECDP-synthase</shortName>
        <shortName evidence="1">MECPP-synthase</shortName>
        <shortName evidence="1">MECPS</shortName>
        <ecNumber evidence="1">4.6.1.12</ecNumber>
    </recommendedName>
</protein>
<evidence type="ECO:0000255" key="1">
    <source>
        <dbReference type="HAMAP-Rule" id="MF_00107"/>
    </source>
</evidence>
<keyword id="KW-0414">Isoprene biosynthesis</keyword>
<keyword id="KW-0456">Lyase</keyword>
<keyword id="KW-0479">Metal-binding</keyword>
<gene>
    <name evidence="1" type="primary">ispF</name>
    <name type="ordered locus">EcSMS35_2871</name>
</gene>
<dbReference type="EC" id="4.6.1.12" evidence="1"/>
<dbReference type="EMBL" id="CP000970">
    <property type="protein sequence ID" value="ACB16269.1"/>
    <property type="molecule type" value="Genomic_DNA"/>
</dbReference>
<dbReference type="RefSeq" id="WP_001219237.1">
    <property type="nucleotide sequence ID" value="NC_010498.1"/>
</dbReference>
<dbReference type="SMR" id="B1LQ66"/>
<dbReference type="KEGG" id="ecm:EcSMS35_2871"/>
<dbReference type="HOGENOM" id="CLU_084630_2_0_6"/>
<dbReference type="UniPathway" id="UPA00056">
    <property type="reaction ID" value="UER00095"/>
</dbReference>
<dbReference type="Proteomes" id="UP000007011">
    <property type="component" value="Chromosome"/>
</dbReference>
<dbReference type="GO" id="GO:0008685">
    <property type="term" value="F:2-C-methyl-D-erythritol 2,4-cyclodiphosphate synthase activity"/>
    <property type="evidence" value="ECO:0007669"/>
    <property type="project" value="UniProtKB-UniRule"/>
</dbReference>
<dbReference type="GO" id="GO:0046872">
    <property type="term" value="F:metal ion binding"/>
    <property type="evidence" value="ECO:0007669"/>
    <property type="project" value="UniProtKB-KW"/>
</dbReference>
<dbReference type="GO" id="GO:0019288">
    <property type="term" value="P:isopentenyl diphosphate biosynthetic process, methylerythritol 4-phosphate pathway"/>
    <property type="evidence" value="ECO:0007669"/>
    <property type="project" value="UniProtKB-UniRule"/>
</dbReference>
<dbReference type="GO" id="GO:0016114">
    <property type="term" value="P:terpenoid biosynthetic process"/>
    <property type="evidence" value="ECO:0007669"/>
    <property type="project" value="InterPro"/>
</dbReference>
<dbReference type="CDD" id="cd00554">
    <property type="entry name" value="MECDP_synthase"/>
    <property type="match status" value="1"/>
</dbReference>
<dbReference type="FunFam" id="3.30.1330.50:FF:000001">
    <property type="entry name" value="2-C-methyl-D-erythritol 2,4-cyclodiphosphate synthase"/>
    <property type="match status" value="1"/>
</dbReference>
<dbReference type="Gene3D" id="3.30.1330.50">
    <property type="entry name" value="2-C-methyl-D-erythritol 2,4-cyclodiphosphate synthase"/>
    <property type="match status" value="1"/>
</dbReference>
<dbReference type="HAMAP" id="MF_00107">
    <property type="entry name" value="IspF"/>
    <property type="match status" value="1"/>
</dbReference>
<dbReference type="InterPro" id="IPR003526">
    <property type="entry name" value="MECDP_synthase"/>
</dbReference>
<dbReference type="InterPro" id="IPR020555">
    <property type="entry name" value="MECDP_synthase_CS"/>
</dbReference>
<dbReference type="InterPro" id="IPR036571">
    <property type="entry name" value="MECDP_synthase_sf"/>
</dbReference>
<dbReference type="NCBIfam" id="TIGR00151">
    <property type="entry name" value="ispF"/>
    <property type="match status" value="1"/>
</dbReference>
<dbReference type="PANTHER" id="PTHR43181">
    <property type="entry name" value="2-C-METHYL-D-ERYTHRITOL 2,4-CYCLODIPHOSPHATE SYNTHASE, CHLOROPLASTIC"/>
    <property type="match status" value="1"/>
</dbReference>
<dbReference type="PANTHER" id="PTHR43181:SF1">
    <property type="entry name" value="2-C-METHYL-D-ERYTHRITOL 2,4-CYCLODIPHOSPHATE SYNTHASE, CHLOROPLASTIC"/>
    <property type="match status" value="1"/>
</dbReference>
<dbReference type="Pfam" id="PF02542">
    <property type="entry name" value="YgbB"/>
    <property type="match status" value="1"/>
</dbReference>
<dbReference type="SUPFAM" id="SSF69765">
    <property type="entry name" value="IpsF-like"/>
    <property type="match status" value="1"/>
</dbReference>
<dbReference type="PROSITE" id="PS01350">
    <property type="entry name" value="ISPF"/>
    <property type="match status" value="1"/>
</dbReference>